<gene>
    <name evidence="1" type="primary">psbA</name>
</gene>
<proteinExistence type="inferred from homology"/>
<geneLocation type="chloroplast"/>
<dbReference type="EC" id="1.10.3.9" evidence="1"/>
<dbReference type="EMBL" id="DQ887676">
    <property type="protein sequence ID" value="ABH88277.1"/>
    <property type="molecule type" value="Genomic_DNA"/>
</dbReference>
<dbReference type="RefSeq" id="YP_784366.1">
    <property type="nucleotide sequence ID" value="NC_008456.1"/>
</dbReference>
<dbReference type="SMR" id="Q06H17"/>
<dbReference type="GeneID" id="4363637"/>
<dbReference type="GO" id="GO:0009535">
    <property type="term" value="C:chloroplast thylakoid membrane"/>
    <property type="evidence" value="ECO:0007669"/>
    <property type="project" value="UniProtKB-SubCell"/>
</dbReference>
<dbReference type="GO" id="GO:0009523">
    <property type="term" value="C:photosystem II"/>
    <property type="evidence" value="ECO:0007669"/>
    <property type="project" value="UniProtKB-KW"/>
</dbReference>
<dbReference type="GO" id="GO:0016168">
    <property type="term" value="F:chlorophyll binding"/>
    <property type="evidence" value="ECO:0007669"/>
    <property type="project" value="UniProtKB-UniRule"/>
</dbReference>
<dbReference type="GO" id="GO:0045156">
    <property type="term" value="F:electron transporter, transferring electrons within the cyclic electron transport pathway of photosynthesis activity"/>
    <property type="evidence" value="ECO:0007669"/>
    <property type="project" value="InterPro"/>
</dbReference>
<dbReference type="GO" id="GO:0005506">
    <property type="term" value="F:iron ion binding"/>
    <property type="evidence" value="ECO:0007669"/>
    <property type="project" value="UniProtKB-UniRule"/>
</dbReference>
<dbReference type="GO" id="GO:0016682">
    <property type="term" value="F:oxidoreductase activity, acting on diphenols and related substances as donors, oxygen as acceptor"/>
    <property type="evidence" value="ECO:0007669"/>
    <property type="project" value="UniProtKB-UniRule"/>
</dbReference>
<dbReference type="GO" id="GO:0010242">
    <property type="term" value="F:oxygen evolving activity"/>
    <property type="evidence" value="ECO:0007669"/>
    <property type="project" value="UniProtKB-EC"/>
</dbReference>
<dbReference type="GO" id="GO:0009772">
    <property type="term" value="P:photosynthetic electron transport in photosystem II"/>
    <property type="evidence" value="ECO:0007669"/>
    <property type="project" value="InterPro"/>
</dbReference>
<dbReference type="GO" id="GO:0009635">
    <property type="term" value="P:response to herbicide"/>
    <property type="evidence" value="ECO:0007669"/>
    <property type="project" value="UniProtKB-KW"/>
</dbReference>
<dbReference type="CDD" id="cd09289">
    <property type="entry name" value="Photosystem-II_D1"/>
    <property type="match status" value="1"/>
</dbReference>
<dbReference type="FunFam" id="1.20.85.10:FF:000002">
    <property type="entry name" value="Photosystem II protein D1"/>
    <property type="match status" value="1"/>
</dbReference>
<dbReference type="Gene3D" id="1.20.85.10">
    <property type="entry name" value="Photosystem II protein D1-like"/>
    <property type="match status" value="1"/>
</dbReference>
<dbReference type="HAMAP" id="MF_01379">
    <property type="entry name" value="PSII_PsbA_D1"/>
    <property type="match status" value="1"/>
</dbReference>
<dbReference type="InterPro" id="IPR055266">
    <property type="entry name" value="D1/D2"/>
</dbReference>
<dbReference type="InterPro" id="IPR036854">
    <property type="entry name" value="Photo_II_D1/D2_sf"/>
</dbReference>
<dbReference type="InterPro" id="IPR000484">
    <property type="entry name" value="Photo_RC_L/M"/>
</dbReference>
<dbReference type="InterPro" id="IPR055265">
    <property type="entry name" value="Photo_RC_L/M_CS"/>
</dbReference>
<dbReference type="InterPro" id="IPR005867">
    <property type="entry name" value="PSII_D1"/>
</dbReference>
<dbReference type="NCBIfam" id="TIGR01151">
    <property type="entry name" value="psbA"/>
    <property type="match status" value="1"/>
</dbReference>
<dbReference type="PANTHER" id="PTHR33149:SF12">
    <property type="entry name" value="PHOTOSYSTEM II D2 PROTEIN"/>
    <property type="match status" value="1"/>
</dbReference>
<dbReference type="PANTHER" id="PTHR33149">
    <property type="entry name" value="PHOTOSYSTEM II PROTEIN D1"/>
    <property type="match status" value="1"/>
</dbReference>
<dbReference type="Pfam" id="PF00124">
    <property type="entry name" value="Photo_RC"/>
    <property type="match status" value="1"/>
</dbReference>
<dbReference type="PRINTS" id="PR00256">
    <property type="entry name" value="REACTNCENTRE"/>
</dbReference>
<dbReference type="SUPFAM" id="SSF81483">
    <property type="entry name" value="Bacterial photosystem II reaction centre, L and M subunits"/>
    <property type="match status" value="1"/>
</dbReference>
<dbReference type="PROSITE" id="PS00244">
    <property type="entry name" value="REACTION_CENTER"/>
    <property type="match status" value="1"/>
</dbReference>
<reference key="1">
    <citation type="journal article" date="2006" name="BMC Evol. Biol.">
        <title>Complete plastid genome sequences of Drimys, Liriodendron, and Piper: implications for the phylogenetic relationships of magnoliids.</title>
        <authorList>
            <person name="Cai Z."/>
            <person name="Penaflor C."/>
            <person name="Kuehl J.V."/>
            <person name="Leebens-Mack J."/>
            <person name="Carlson J.E."/>
            <person name="dePamphilis C.W."/>
            <person name="Boore J.L."/>
            <person name="Jansen R.K."/>
        </authorList>
    </citation>
    <scope>NUCLEOTIDE SEQUENCE [LARGE SCALE GENOMIC DNA]</scope>
</reference>
<organism>
    <name type="scientific">Drimys granadensis</name>
    <dbReference type="NCBI Taxonomy" id="224735"/>
    <lineage>
        <taxon>Eukaryota</taxon>
        <taxon>Viridiplantae</taxon>
        <taxon>Streptophyta</taxon>
        <taxon>Embryophyta</taxon>
        <taxon>Tracheophyta</taxon>
        <taxon>Spermatophyta</taxon>
        <taxon>Magnoliopsida</taxon>
        <taxon>Magnoliidae</taxon>
        <taxon>Canellales</taxon>
        <taxon>Winteraceae</taxon>
        <taxon>Drimys</taxon>
    </lineage>
</organism>
<name>PSBA_DRIGR</name>
<comment type="function">
    <text evidence="1">Photosystem II (PSII) is a light-driven water:plastoquinone oxidoreductase that uses light energy to abstract electrons from H(2)O, generating O(2) and a proton gradient subsequently used for ATP formation. It consists of a core antenna complex that captures photons, and an electron transfer chain that converts photonic excitation into a charge separation. The D1/D2 (PsbA/PsbD) reaction center heterodimer binds P680, the primary electron donor of PSII as well as several subsequent electron acceptors.</text>
</comment>
<comment type="catalytic activity">
    <reaction evidence="1">
        <text>2 a plastoquinone + 4 hnu + 2 H2O = 2 a plastoquinol + O2</text>
        <dbReference type="Rhea" id="RHEA:36359"/>
        <dbReference type="Rhea" id="RHEA-COMP:9561"/>
        <dbReference type="Rhea" id="RHEA-COMP:9562"/>
        <dbReference type="ChEBI" id="CHEBI:15377"/>
        <dbReference type="ChEBI" id="CHEBI:15379"/>
        <dbReference type="ChEBI" id="CHEBI:17757"/>
        <dbReference type="ChEBI" id="CHEBI:30212"/>
        <dbReference type="ChEBI" id="CHEBI:62192"/>
        <dbReference type="EC" id="1.10.3.9"/>
    </reaction>
</comment>
<comment type="cofactor">
    <text evidence="1">The D1/D2 heterodimer binds P680, chlorophylls that are the primary electron donor of PSII, and subsequent electron acceptors. It shares a non-heme iron and each subunit binds pheophytin, quinone, additional chlorophylls, carotenoids and lipids. D1 provides most of the ligands for the Mn4-Ca-O5 cluster of the oxygen-evolving complex (OEC). There is also a Cl(-1) ion associated with D1 and D2, which is required for oxygen evolution. The PSII complex binds additional chlorophylls, carotenoids and specific lipids.</text>
</comment>
<comment type="subunit">
    <text evidence="1">PSII is composed of 1 copy each of membrane proteins PsbA, PsbB, PsbC, PsbD, PsbE, PsbF, PsbH, PsbI, PsbJ, PsbK, PsbL, PsbM, PsbT, PsbX, PsbY, PsbZ, Psb30/Ycf12, at least 3 peripheral proteins of the oxygen-evolving complex and a large number of cofactors. It forms dimeric complexes.</text>
</comment>
<comment type="subcellular location">
    <subcellularLocation>
        <location evidence="1">Plastid</location>
        <location evidence="1">Chloroplast thylakoid membrane</location>
        <topology evidence="1">Multi-pass membrane protein</topology>
    </subcellularLocation>
</comment>
<comment type="PTM">
    <text evidence="1">Tyr-161 forms a radical intermediate that is referred to as redox-active TyrZ, YZ or Y-Z.</text>
</comment>
<comment type="PTM">
    <text evidence="1">C-terminally processed by CTPA; processing is essential to allow assembly of the oxygen-evolving complex and thus photosynthetic growth.</text>
</comment>
<comment type="miscellaneous">
    <text evidence="1">2 of the reaction center chlorophylls (ChlD1 and ChlD2) are entirely coordinated by water.</text>
</comment>
<comment type="miscellaneous">
    <text evidence="1">Herbicides such as atrazine, BNT, diuron or ioxynil bind in the Q(B) binding site and block subsequent electron transfer.</text>
</comment>
<comment type="similarity">
    <text evidence="1">Belongs to the reaction center PufL/M/PsbA/D family.</text>
</comment>
<feature type="initiator methionine" description="Removed" evidence="1">
    <location>
        <position position="1"/>
    </location>
</feature>
<feature type="chain" id="PRO_0000339991" description="Photosystem II protein D1" evidence="1">
    <location>
        <begin position="2"/>
        <end position="344"/>
    </location>
</feature>
<feature type="propeptide" id="PRO_0000339992" evidence="1">
    <location>
        <begin position="345"/>
        <end position="353"/>
    </location>
</feature>
<feature type="transmembrane region" description="Helical" evidence="1">
    <location>
        <begin position="29"/>
        <end position="46"/>
    </location>
</feature>
<feature type="transmembrane region" description="Helical" evidence="1">
    <location>
        <begin position="118"/>
        <end position="133"/>
    </location>
</feature>
<feature type="transmembrane region" description="Helical" evidence="1">
    <location>
        <begin position="142"/>
        <end position="156"/>
    </location>
</feature>
<feature type="transmembrane region" description="Helical" evidence="1">
    <location>
        <begin position="197"/>
        <end position="218"/>
    </location>
</feature>
<feature type="transmembrane region" description="Helical" evidence="1">
    <location>
        <begin position="274"/>
        <end position="288"/>
    </location>
</feature>
<feature type="binding site" description="axial binding residue" evidence="1">
    <location>
        <position position="118"/>
    </location>
    <ligand>
        <name>chlorophyll a</name>
        <dbReference type="ChEBI" id="CHEBI:58416"/>
        <label>ChlzD1</label>
    </ligand>
    <ligandPart>
        <name>Mg</name>
        <dbReference type="ChEBI" id="CHEBI:25107"/>
    </ligandPart>
</feature>
<feature type="binding site" evidence="1">
    <location>
        <position position="126"/>
    </location>
    <ligand>
        <name>pheophytin a</name>
        <dbReference type="ChEBI" id="CHEBI:136840"/>
        <label>D1</label>
    </ligand>
</feature>
<feature type="binding site" evidence="1">
    <location>
        <position position="170"/>
    </location>
    <ligand>
        <name>[CaMn4O5] cluster</name>
        <dbReference type="ChEBI" id="CHEBI:189552"/>
    </ligand>
</feature>
<feature type="binding site" evidence="1">
    <location>
        <position position="189"/>
    </location>
    <ligand>
        <name>[CaMn4O5] cluster</name>
        <dbReference type="ChEBI" id="CHEBI:189552"/>
    </ligand>
</feature>
<feature type="binding site" description="axial binding residue" evidence="1">
    <location>
        <position position="198"/>
    </location>
    <ligand>
        <name>chlorophyll a</name>
        <dbReference type="ChEBI" id="CHEBI:58416"/>
        <label>PD1</label>
    </ligand>
    <ligandPart>
        <name>Mg</name>
        <dbReference type="ChEBI" id="CHEBI:25107"/>
    </ligandPart>
</feature>
<feature type="binding site" evidence="1">
    <location>
        <position position="215"/>
    </location>
    <ligand>
        <name>a quinone</name>
        <dbReference type="ChEBI" id="CHEBI:132124"/>
        <label>B</label>
    </ligand>
</feature>
<feature type="binding site" evidence="1">
    <location>
        <position position="215"/>
    </location>
    <ligand>
        <name>Fe cation</name>
        <dbReference type="ChEBI" id="CHEBI:24875"/>
        <note>ligand shared with heterodimeric partner</note>
    </ligand>
</feature>
<feature type="binding site" evidence="1">
    <location>
        <begin position="264"/>
        <end position="265"/>
    </location>
    <ligand>
        <name>a quinone</name>
        <dbReference type="ChEBI" id="CHEBI:132124"/>
        <label>B</label>
    </ligand>
</feature>
<feature type="binding site" evidence="1">
    <location>
        <position position="272"/>
    </location>
    <ligand>
        <name>Fe cation</name>
        <dbReference type="ChEBI" id="CHEBI:24875"/>
        <note>ligand shared with heterodimeric partner</note>
    </ligand>
</feature>
<feature type="binding site" evidence="1">
    <location>
        <position position="332"/>
    </location>
    <ligand>
        <name>[CaMn4O5] cluster</name>
        <dbReference type="ChEBI" id="CHEBI:189552"/>
    </ligand>
</feature>
<feature type="binding site" evidence="1">
    <location>
        <position position="333"/>
    </location>
    <ligand>
        <name>[CaMn4O5] cluster</name>
        <dbReference type="ChEBI" id="CHEBI:189552"/>
    </ligand>
</feature>
<feature type="binding site" evidence="1">
    <location>
        <position position="342"/>
    </location>
    <ligand>
        <name>[CaMn4O5] cluster</name>
        <dbReference type="ChEBI" id="CHEBI:189552"/>
    </ligand>
</feature>
<feature type="binding site" evidence="1">
    <location>
        <position position="344"/>
    </location>
    <ligand>
        <name>[CaMn4O5] cluster</name>
        <dbReference type="ChEBI" id="CHEBI:189552"/>
    </ligand>
</feature>
<feature type="site" description="Tyrosine radical intermediate" evidence="1">
    <location>
        <position position="161"/>
    </location>
</feature>
<feature type="site" description="Stabilizes free radical intermediate" evidence="1">
    <location>
        <position position="190"/>
    </location>
</feature>
<feature type="site" description="Cleavage; by CTPA" evidence="1">
    <location>
        <begin position="344"/>
        <end position="345"/>
    </location>
</feature>
<feature type="modified residue" description="N-acetylthreonine" evidence="1">
    <location>
        <position position="2"/>
    </location>
</feature>
<feature type="modified residue" description="Phosphothreonine" evidence="1">
    <location>
        <position position="2"/>
    </location>
</feature>
<protein>
    <recommendedName>
        <fullName evidence="1">Photosystem II protein D1</fullName>
        <shortName evidence="1">PSII D1 protein</shortName>
        <ecNumber evidence="1">1.10.3.9</ecNumber>
    </recommendedName>
    <alternativeName>
        <fullName evidence="1">Photosystem II Q(B) protein</fullName>
    </alternativeName>
</protein>
<keyword id="KW-0007">Acetylation</keyword>
<keyword id="KW-0106">Calcium</keyword>
<keyword id="KW-0148">Chlorophyll</keyword>
<keyword id="KW-0150">Chloroplast</keyword>
<keyword id="KW-0157">Chromophore</keyword>
<keyword id="KW-0249">Electron transport</keyword>
<keyword id="KW-0359">Herbicide resistance</keyword>
<keyword id="KW-0408">Iron</keyword>
<keyword id="KW-0460">Magnesium</keyword>
<keyword id="KW-0464">Manganese</keyword>
<keyword id="KW-0472">Membrane</keyword>
<keyword id="KW-0479">Metal-binding</keyword>
<keyword id="KW-0560">Oxidoreductase</keyword>
<keyword id="KW-0597">Phosphoprotein</keyword>
<keyword id="KW-0602">Photosynthesis</keyword>
<keyword id="KW-0604">Photosystem II</keyword>
<keyword id="KW-0934">Plastid</keyword>
<keyword id="KW-0793">Thylakoid</keyword>
<keyword id="KW-0812">Transmembrane</keyword>
<keyword id="KW-1133">Transmembrane helix</keyword>
<keyword id="KW-0813">Transport</keyword>
<sequence length="353" mass="38909">MTAILERRESTSLWGRFCNWITSTENRLYIGWFGVLMIPTLLTATSVFIIAFIAAPPVDIDGIREPVSGSLLYGNNIISGAIIPTSAAIGLHFYPIWEAASVDEWLYNGGPYELIVLHFLLGVACYMGREWELSFRLGMRPWIAVAYSAPVAAATAVFLIYPIGQGSFSDGMPLGISGTFNFMIVFQAEHNILMHPFHMLGVAGVFGGSLFSAMHGSLVTSSLIRETTENESANEGYRFGQEEETYNIVAAHGYFGRLIFQYASFNNSRSLHFFLAAWPVVGIWFTALGISTMAFNLNGFNFNQSVVDSQGRVINTWADIINRANLGMEVMHERNAHNFPLDLAAVEAPSTNG</sequence>
<accession>Q06H17</accession>
<evidence type="ECO:0000255" key="1">
    <source>
        <dbReference type="HAMAP-Rule" id="MF_01379"/>
    </source>
</evidence>